<keyword id="KW-0378">Hydrolase</keyword>
<dbReference type="EC" id="3.5.1.110" evidence="1"/>
<dbReference type="EMBL" id="AM946981">
    <property type="protein sequence ID" value="CAQ31538.1"/>
    <property type="molecule type" value="Genomic_DNA"/>
</dbReference>
<dbReference type="EMBL" id="CP001665">
    <property type="protein sequence ID" value="ACT29605.1"/>
    <property type="status" value="ALT_INIT"/>
    <property type="molecule type" value="Genomic_DNA"/>
</dbReference>
<dbReference type="EMBL" id="CP001509">
    <property type="protein sequence ID" value="ACT42909.1"/>
    <property type="status" value="ALT_INIT"/>
    <property type="molecule type" value="Genomic_DNA"/>
</dbReference>
<dbReference type="RefSeq" id="WP_001307100.1">
    <property type="nucleotide sequence ID" value="NZ_JADXDS010000001.1"/>
</dbReference>
<dbReference type="SMR" id="C6EHJ6"/>
<dbReference type="KEGG" id="ebd:ECBD_2583"/>
<dbReference type="KEGG" id="ebe:B21_01021"/>
<dbReference type="KEGG" id="ebl:ECD_01014"/>
<dbReference type="PATRIC" id="fig|469008.15.peg.1036"/>
<dbReference type="eggNOG" id="COG1335">
    <property type="taxonomic scope" value="Bacteria"/>
</dbReference>
<dbReference type="HOGENOM" id="CLU_068979_8_0_6"/>
<dbReference type="GO" id="GO:0016811">
    <property type="term" value="F:hydrolase activity, acting on carbon-nitrogen (but not peptide) bonds, in linear amides"/>
    <property type="evidence" value="ECO:0007669"/>
    <property type="project" value="UniProtKB-UniRule"/>
</dbReference>
<dbReference type="GO" id="GO:0019740">
    <property type="term" value="P:nitrogen utilization"/>
    <property type="evidence" value="ECO:0007669"/>
    <property type="project" value="UniProtKB-UniRule"/>
</dbReference>
<dbReference type="GO" id="GO:0006212">
    <property type="term" value="P:uracil catabolic process"/>
    <property type="evidence" value="ECO:0007669"/>
    <property type="project" value="UniProtKB-UniRule"/>
</dbReference>
<dbReference type="CDD" id="cd00431">
    <property type="entry name" value="cysteine_hydrolases"/>
    <property type="match status" value="1"/>
</dbReference>
<dbReference type="FunFam" id="3.40.50.850:FF:000004">
    <property type="entry name" value="Peroxyureidoacrylate/ureidoacrylate amidohydrolase RutB"/>
    <property type="match status" value="1"/>
</dbReference>
<dbReference type="Gene3D" id="3.40.50.850">
    <property type="entry name" value="Isochorismatase-like"/>
    <property type="match status" value="1"/>
</dbReference>
<dbReference type="HAMAP" id="MF_00830">
    <property type="entry name" value="RutB"/>
    <property type="match status" value="1"/>
</dbReference>
<dbReference type="InterPro" id="IPR000868">
    <property type="entry name" value="Isochorismatase-like_dom"/>
</dbReference>
<dbReference type="InterPro" id="IPR050272">
    <property type="entry name" value="Isochorismatase-like_hydrls"/>
</dbReference>
<dbReference type="InterPro" id="IPR036380">
    <property type="entry name" value="Isochorismatase-like_sf"/>
</dbReference>
<dbReference type="InterPro" id="IPR019916">
    <property type="entry name" value="RutB"/>
</dbReference>
<dbReference type="NCBIfam" id="TIGR03614">
    <property type="entry name" value="RutB"/>
    <property type="match status" value="1"/>
</dbReference>
<dbReference type="PANTHER" id="PTHR43540:SF6">
    <property type="entry name" value="ISOCHORISMATASE-LIKE DOMAIN-CONTAINING PROTEIN"/>
    <property type="match status" value="1"/>
</dbReference>
<dbReference type="PANTHER" id="PTHR43540">
    <property type="entry name" value="PEROXYUREIDOACRYLATE/UREIDOACRYLATE AMIDOHYDROLASE-RELATED"/>
    <property type="match status" value="1"/>
</dbReference>
<dbReference type="Pfam" id="PF00857">
    <property type="entry name" value="Isochorismatase"/>
    <property type="match status" value="1"/>
</dbReference>
<dbReference type="SUPFAM" id="SSF52499">
    <property type="entry name" value="Isochorismatase-like hydrolases"/>
    <property type="match status" value="1"/>
</dbReference>
<feature type="chain" id="PRO_0000402660" description="Ureidoacrylate amidohydrolase RutB">
    <location>
        <begin position="1"/>
        <end position="230"/>
    </location>
</feature>
<feature type="active site" description="Proton acceptor" evidence="1">
    <location>
        <position position="24"/>
    </location>
</feature>
<feature type="active site" evidence="1">
    <location>
        <position position="133"/>
    </location>
</feature>
<feature type="active site" description="Nucleophile" evidence="1">
    <location>
        <position position="166"/>
    </location>
</feature>
<accession>C6EHJ6</accession>
<accession>C5W2X0</accession>
<accession>C6VAT9</accession>
<organism>
    <name type="scientific">Escherichia coli (strain B / BL21-DE3)</name>
    <dbReference type="NCBI Taxonomy" id="469008"/>
    <lineage>
        <taxon>Bacteria</taxon>
        <taxon>Pseudomonadati</taxon>
        <taxon>Pseudomonadota</taxon>
        <taxon>Gammaproteobacteria</taxon>
        <taxon>Enterobacterales</taxon>
        <taxon>Enterobacteriaceae</taxon>
        <taxon>Escherichia</taxon>
    </lineage>
</organism>
<sequence>MTTLTARPEAITFDPQQSALIVVDMQNAYATPGGYLDLAGFDVSTTRPVIANIQTAVTAARAAGMLIIWFQNGWDEQYVEAGGPGSPNFHKSNALKTMRKQPQLQGKLLAKGSWDYQLVDELVPQPGDIVLPKPRYSGFFNTPLDSILRSRGIRHLVFTGIATNVCVESTLRDGFFLEYFGVVLEDATHQAGPEFAQKAALFNIETFFGWVSDVETFCDALSPTSFAHIA</sequence>
<protein>
    <recommendedName>
        <fullName evidence="1">Ureidoacrylate amidohydrolase RutB</fullName>
        <ecNumber evidence="1">3.5.1.110</ecNumber>
    </recommendedName>
</protein>
<evidence type="ECO:0000255" key="1">
    <source>
        <dbReference type="HAMAP-Rule" id="MF_00830"/>
    </source>
</evidence>
<evidence type="ECO:0000305" key="2"/>
<gene>
    <name evidence="1" type="primary">rutB</name>
    <name type="ordered locus">ECBD_2583</name>
    <name type="ordered locus">ECD_01014</name>
    <name type="ordered locus">B21_01021</name>
</gene>
<comment type="function">
    <text evidence="1">Hydrolyzes ureidoacrylate to form aminoacrylate and carbamate. The carbamate hydrolyzes spontaneously, thereby releasing one of the nitrogen atoms of the pyrimidine ring as ammonia and one of its carbon atoms as CO2.</text>
</comment>
<comment type="catalytic activity">
    <reaction evidence="1">
        <text>(Z)-3-ureidoacrylate + H2O + H(+) = (Z)-3-aminoacrylate + NH4(+) + CO2</text>
        <dbReference type="Rhea" id="RHEA:42624"/>
        <dbReference type="ChEBI" id="CHEBI:15377"/>
        <dbReference type="ChEBI" id="CHEBI:15378"/>
        <dbReference type="ChEBI" id="CHEBI:16526"/>
        <dbReference type="ChEBI" id="CHEBI:28938"/>
        <dbReference type="ChEBI" id="CHEBI:59891"/>
        <dbReference type="ChEBI" id="CHEBI:59894"/>
        <dbReference type="EC" id="3.5.1.110"/>
    </reaction>
</comment>
<comment type="catalytic activity">
    <reaction evidence="1">
        <text>(Z)-3-ureidoacrylate + H2O = (Z)-3-aminoacrylate + carbamate + H(+)</text>
        <dbReference type="Rhea" id="RHEA:31603"/>
        <dbReference type="ChEBI" id="CHEBI:13941"/>
        <dbReference type="ChEBI" id="CHEBI:15377"/>
        <dbReference type="ChEBI" id="CHEBI:15378"/>
        <dbReference type="ChEBI" id="CHEBI:59891"/>
        <dbReference type="ChEBI" id="CHEBI:59894"/>
    </reaction>
</comment>
<comment type="catalytic activity">
    <reaction evidence="1">
        <text>(Z)-2-methylureidoacrylate + H2O + H(+) = (Z)-2-methylaminoacrylate + NH4(+) + CO2</text>
        <dbReference type="Rhea" id="RHEA:42620"/>
        <dbReference type="ChEBI" id="CHEBI:15377"/>
        <dbReference type="ChEBI" id="CHEBI:15378"/>
        <dbReference type="ChEBI" id="CHEBI:16526"/>
        <dbReference type="ChEBI" id="CHEBI:28938"/>
        <dbReference type="ChEBI" id="CHEBI:143783"/>
        <dbReference type="ChEBI" id="CHEBI:145735"/>
        <dbReference type="EC" id="3.5.1.110"/>
    </reaction>
</comment>
<comment type="induction">
    <text evidence="1">Up-regulated by the nitrogen regulatory protein C (NtrC also called GlnG) and repressed by RutR.</text>
</comment>
<comment type="similarity">
    <text evidence="1">Belongs to the isochorismatase family. RutB subfamily.</text>
</comment>
<comment type="sequence caution" evidence="2">
    <conflict type="erroneous initiation">
        <sequence resource="EMBL-CDS" id="ACT29605"/>
    </conflict>
    <text>Extended N-terminus.</text>
</comment>
<comment type="sequence caution" evidence="2">
    <conflict type="erroneous initiation">
        <sequence resource="EMBL-CDS" id="ACT42909"/>
    </conflict>
    <text>Extended N-terminus.</text>
</comment>
<name>RUTB_ECOBD</name>
<proteinExistence type="inferred from homology"/>
<reference key="1">
    <citation type="submission" date="2009-06" db="EMBL/GenBank/DDBJ databases">
        <title>Sequencing and gene expression analysis of Escherichia coli BL21.</title>
        <authorList>
            <person name="Leparc G."/>
            <person name="Striedner G."/>
            <person name="Bayer K."/>
            <person name="Kreil D."/>
            <person name="Krempl P.M."/>
        </authorList>
    </citation>
    <scope>NUCLEOTIDE SEQUENCE [LARGE SCALE GENOMIC DNA]</scope>
    <source>
        <strain>B / BL21-DE3</strain>
    </source>
</reference>
<reference key="2">
    <citation type="submission" date="2009-07" db="EMBL/GenBank/DDBJ databases">
        <title>Complete sequence of Escherichia coli BL21(DE3).</title>
        <authorList>
            <person name="Lucas S."/>
            <person name="Copeland A."/>
            <person name="Lapidus A."/>
            <person name="Glavina del Rio T."/>
            <person name="Dalin E."/>
            <person name="Tice H."/>
            <person name="Bruce D."/>
            <person name="Goodwin L."/>
            <person name="Pitluck S."/>
            <person name="LaButti K.M."/>
            <person name="Clum A."/>
            <person name="Larimer F."/>
            <person name="Land M."/>
            <person name="Hauser L."/>
            <person name="Kyrpides N."/>
            <person name="Anderson I."/>
            <person name="Sorek R."/>
            <person name="Rubin E."/>
        </authorList>
    </citation>
    <scope>NUCLEOTIDE SEQUENCE [LARGE SCALE GENOMIC DNA]</scope>
    <source>
        <strain>B / BL21-DE3</strain>
    </source>
</reference>
<reference key="3">
    <citation type="journal article" date="2009" name="J. Mol. Biol.">
        <title>Genome sequences of Escherichia coli B strains REL606 and BL21(DE3).</title>
        <authorList>
            <person name="Jeong H."/>
            <person name="Barbe V."/>
            <person name="Lee C.H."/>
            <person name="Vallenet D."/>
            <person name="Yu D.S."/>
            <person name="Choi S.H."/>
            <person name="Couloux A."/>
            <person name="Lee S.W."/>
            <person name="Yoon S.H."/>
            <person name="Cattolico L."/>
            <person name="Hur C.G."/>
            <person name="Park H.S."/>
            <person name="Segurens B."/>
            <person name="Kim S.C."/>
            <person name="Oh T.K."/>
            <person name="Lenski R.E."/>
            <person name="Studier F.W."/>
            <person name="Daegelen P."/>
            <person name="Kim J.F."/>
        </authorList>
    </citation>
    <scope>NUCLEOTIDE SEQUENCE [LARGE SCALE GENOMIC DNA]</scope>
    <source>
        <strain>B / BL21-DE3</strain>
    </source>
</reference>